<proteinExistence type="inferred from homology"/>
<dbReference type="EC" id="3.4.13.21" evidence="1"/>
<dbReference type="EMBL" id="CP000970">
    <property type="protein sequence ID" value="ACB17783.1"/>
    <property type="molecule type" value="Genomic_DNA"/>
</dbReference>
<dbReference type="RefSeq" id="WP_000421763.1">
    <property type="nucleotide sequence ID" value="NC_010498.1"/>
</dbReference>
<dbReference type="SMR" id="B1LPH7"/>
<dbReference type="MEROPS" id="S51.001"/>
<dbReference type="GeneID" id="93777874"/>
<dbReference type="KEGG" id="ecm:EcSMS35_4474"/>
<dbReference type="HOGENOM" id="CLU_071689_0_0_6"/>
<dbReference type="Proteomes" id="UP000007011">
    <property type="component" value="Chromosome"/>
</dbReference>
<dbReference type="GO" id="GO:0005737">
    <property type="term" value="C:cytoplasm"/>
    <property type="evidence" value="ECO:0007669"/>
    <property type="project" value="UniProtKB-SubCell"/>
</dbReference>
<dbReference type="GO" id="GO:0016805">
    <property type="term" value="F:dipeptidase activity"/>
    <property type="evidence" value="ECO:0007669"/>
    <property type="project" value="UniProtKB-UniRule"/>
</dbReference>
<dbReference type="GO" id="GO:0008236">
    <property type="term" value="F:serine-type peptidase activity"/>
    <property type="evidence" value="ECO:0007669"/>
    <property type="project" value="UniProtKB-KW"/>
</dbReference>
<dbReference type="GO" id="GO:0006508">
    <property type="term" value="P:proteolysis"/>
    <property type="evidence" value="ECO:0007669"/>
    <property type="project" value="UniProtKB-UniRule"/>
</dbReference>
<dbReference type="CDD" id="cd03146">
    <property type="entry name" value="GAT1_Peptidase_E"/>
    <property type="match status" value="1"/>
</dbReference>
<dbReference type="FunFam" id="3.40.50.880:FF:000007">
    <property type="entry name" value="Peptidase E"/>
    <property type="match status" value="1"/>
</dbReference>
<dbReference type="Gene3D" id="3.40.50.880">
    <property type="match status" value="1"/>
</dbReference>
<dbReference type="HAMAP" id="MF_00510">
    <property type="entry name" value="Peptidase_E"/>
    <property type="match status" value="1"/>
</dbReference>
<dbReference type="InterPro" id="IPR029062">
    <property type="entry name" value="Class_I_gatase-like"/>
</dbReference>
<dbReference type="InterPro" id="IPR005320">
    <property type="entry name" value="Peptidase_S51"/>
</dbReference>
<dbReference type="InterPro" id="IPR023172">
    <property type="entry name" value="Peptidase_S51_dipeptidase-E"/>
</dbReference>
<dbReference type="NCBIfam" id="NF003642">
    <property type="entry name" value="PRK05282.1"/>
    <property type="match status" value="1"/>
</dbReference>
<dbReference type="PANTHER" id="PTHR20842:SF0">
    <property type="entry name" value="ALPHA-ASPARTYL DIPEPTIDASE"/>
    <property type="match status" value="1"/>
</dbReference>
<dbReference type="PANTHER" id="PTHR20842">
    <property type="entry name" value="PROTEASE S51 ALPHA-ASPARTYL DIPEPTIDASE"/>
    <property type="match status" value="1"/>
</dbReference>
<dbReference type="Pfam" id="PF03575">
    <property type="entry name" value="Peptidase_S51"/>
    <property type="match status" value="1"/>
</dbReference>
<dbReference type="SUPFAM" id="SSF52317">
    <property type="entry name" value="Class I glutamine amidotransferase-like"/>
    <property type="match status" value="1"/>
</dbReference>
<comment type="function">
    <text evidence="1">Hydrolyzes dipeptides containing N-terminal aspartate residues. May play a role in allowing the cell to use peptide aspartate to spare carbon otherwise required for the synthesis of the aspartate family of amino acids.</text>
</comment>
<comment type="catalytic activity">
    <reaction evidence="1">
        <text>Dipeptidase E catalyzes the hydrolysis of dipeptides Asp-|-Xaa. It does not act on peptides with N-terminal Glu, Asn or Gln, nor does it cleave isoaspartyl peptides.</text>
        <dbReference type="EC" id="3.4.13.21"/>
    </reaction>
</comment>
<comment type="subcellular location">
    <subcellularLocation>
        <location evidence="1">Cytoplasm</location>
    </subcellularLocation>
</comment>
<comment type="similarity">
    <text evidence="1">Belongs to the peptidase S51 family.</text>
</comment>
<keyword id="KW-0963">Cytoplasm</keyword>
<keyword id="KW-0224">Dipeptidase</keyword>
<keyword id="KW-0378">Hydrolase</keyword>
<keyword id="KW-0645">Protease</keyword>
<keyword id="KW-0720">Serine protease</keyword>
<sequence length="229" mass="24570">MELLLLSNSTLPGKAWLEHALPLIAEQLQGRRSAVFIPFAGVTQTWDDYTAKTAAVLAPLGVSVTGIHSVVDPVAAIENAEIVIVGGGNTFQLLKQCRERGLLAPITDVVKRGALYIGWSAGANLACPTIRTTNDMPIVDPQGFDALNLFPLQINPHFTNALPEGHKGETREQRIRELLVVAPELTIIGLPEGNWITVSKGHATLGGPNTTYVFKAGEEAVPLEAGHRF</sequence>
<evidence type="ECO:0000255" key="1">
    <source>
        <dbReference type="HAMAP-Rule" id="MF_00510"/>
    </source>
</evidence>
<name>PEPE_ECOSM</name>
<feature type="chain" id="PRO_1000127247" description="Peptidase E">
    <location>
        <begin position="1"/>
        <end position="229"/>
    </location>
</feature>
<feature type="active site" description="Charge relay system" evidence="1">
    <location>
        <position position="120"/>
    </location>
</feature>
<feature type="active site" description="Charge relay system" evidence="1">
    <location>
        <position position="135"/>
    </location>
</feature>
<feature type="active site" description="Charge relay system" evidence="1">
    <location>
        <position position="157"/>
    </location>
</feature>
<accession>B1LPH7</accession>
<gene>
    <name evidence="1" type="primary">pepE</name>
    <name type="ordered locus">EcSMS35_4474</name>
</gene>
<organism>
    <name type="scientific">Escherichia coli (strain SMS-3-5 / SECEC)</name>
    <dbReference type="NCBI Taxonomy" id="439855"/>
    <lineage>
        <taxon>Bacteria</taxon>
        <taxon>Pseudomonadati</taxon>
        <taxon>Pseudomonadota</taxon>
        <taxon>Gammaproteobacteria</taxon>
        <taxon>Enterobacterales</taxon>
        <taxon>Enterobacteriaceae</taxon>
        <taxon>Escherichia</taxon>
    </lineage>
</organism>
<protein>
    <recommendedName>
        <fullName evidence="1">Peptidase E</fullName>
        <ecNumber evidence="1">3.4.13.21</ecNumber>
    </recommendedName>
    <alternativeName>
        <fullName evidence="1">Alpha-aspartyl dipeptidase</fullName>
    </alternativeName>
    <alternativeName>
        <fullName evidence="1">Asp-specific dipeptidase</fullName>
    </alternativeName>
    <alternativeName>
        <fullName evidence="1">Dipeptidase E</fullName>
    </alternativeName>
</protein>
<reference key="1">
    <citation type="journal article" date="2008" name="J. Bacteriol.">
        <title>Insights into the environmental resistance gene pool from the genome sequence of the multidrug-resistant environmental isolate Escherichia coli SMS-3-5.</title>
        <authorList>
            <person name="Fricke W.F."/>
            <person name="Wright M.S."/>
            <person name="Lindell A.H."/>
            <person name="Harkins D.M."/>
            <person name="Baker-Austin C."/>
            <person name="Ravel J."/>
            <person name="Stepanauskas R."/>
        </authorList>
    </citation>
    <scope>NUCLEOTIDE SEQUENCE [LARGE SCALE GENOMIC DNA]</scope>
    <source>
        <strain>SMS-3-5 / SECEC</strain>
    </source>
</reference>